<name>RS6_CITBB</name>
<evidence type="ECO:0000255" key="1">
    <source>
        <dbReference type="HAMAP-Rule" id="MF_00360"/>
    </source>
</evidence>
<evidence type="ECO:0000256" key="2">
    <source>
        <dbReference type="SAM" id="MobiDB-lite"/>
    </source>
</evidence>
<evidence type="ECO:0000305" key="3"/>
<gene>
    <name evidence="1" type="primary">rpsF</name>
    <name type="ordered locus">Gbem_2764</name>
</gene>
<reference key="1">
    <citation type="submission" date="2008-07" db="EMBL/GenBank/DDBJ databases">
        <title>Complete sequence of Geobacter bemidjiensis BEM.</title>
        <authorList>
            <consortium name="US DOE Joint Genome Institute"/>
            <person name="Lucas S."/>
            <person name="Copeland A."/>
            <person name="Lapidus A."/>
            <person name="Glavina del Rio T."/>
            <person name="Dalin E."/>
            <person name="Tice H."/>
            <person name="Bruce D."/>
            <person name="Goodwin L."/>
            <person name="Pitluck S."/>
            <person name="Kiss H."/>
            <person name="Brettin T."/>
            <person name="Detter J.C."/>
            <person name="Han C."/>
            <person name="Kuske C.R."/>
            <person name="Schmutz J."/>
            <person name="Larimer F."/>
            <person name="Land M."/>
            <person name="Hauser L."/>
            <person name="Kyrpides N."/>
            <person name="Lykidis A."/>
            <person name="Lovley D."/>
            <person name="Richardson P."/>
        </authorList>
    </citation>
    <scope>NUCLEOTIDE SEQUENCE [LARGE SCALE GENOMIC DNA]</scope>
    <source>
        <strain>ATCC BAA-1014 / DSM 16622 / JCM 12645 / Bem</strain>
    </source>
</reference>
<comment type="function">
    <text evidence="1">Binds together with bS18 to 16S ribosomal RNA.</text>
</comment>
<comment type="similarity">
    <text evidence="1">Belongs to the bacterial ribosomal protein bS6 family.</text>
</comment>
<proteinExistence type="inferred from homology"/>
<organism>
    <name type="scientific">Citrifermentans bemidjiense (strain ATCC BAA-1014 / DSM 16622 / JCM 12645 / Bem)</name>
    <name type="common">Geobacter bemidjiensis</name>
    <dbReference type="NCBI Taxonomy" id="404380"/>
    <lineage>
        <taxon>Bacteria</taxon>
        <taxon>Pseudomonadati</taxon>
        <taxon>Thermodesulfobacteriota</taxon>
        <taxon>Desulfuromonadia</taxon>
        <taxon>Geobacterales</taxon>
        <taxon>Geobacteraceae</taxon>
        <taxon>Citrifermentans</taxon>
    </lineage>
</organism>
<accession>B5EHW9</accession>
<feature type="chain" id="PRO_1000120757" description="Small ribosomal subunit protein bS6">
    <location>
        <begin position="1"/>
        <end position="134"/>
    </location>
</feature>
<feature type="region of interest" description="Disordered" evidence="2">
    <location>
        <begin position="103"/>
        <end position="134"/>
    </location>
</feature>
<feature type="compositionally biased region" description="Low complexity" evidence="2">
    <location>
        <begin position="118"/>
        <end position="134"/>
    </location>
</feature>
<keyword id="KW-1185">Reference proteome</keyword>
<keyword id="KW-0687">Ribonucleoprotein</keyword>
<keyword id="KW-0689">Ribosomal protein</keyword>
<keyword id="KW-0694">RNA-binding</keyword>
<keyword id="KW-0699">rRNA-binding</keyword>
<protein>
    <recommendedName>
        <fullName evidence="1">Small ribosomal subunit protein bS6</fullName>
    </recommendedName>
    <alternativeName>
        <fullName evidence="3">30S ribosomal protein S6</fullName>
    </alternativeName>
</protein>
<dbReference type="EMBL" id="CP001124">
    <property type="protein sequence ID" value="ACH39768.1"/>
    <property type="molecule type" value="Genomic_DNA"/>
</dbReference>
<dbReference type="RefSeq" id="WP_012531194.1">
    <property type="nucleotide sequence ID" value="NC_011146.1"/>
</dbReference>
<dbReference type="SMR" id="B5EHW9"/>
<dbReference type="STRING" id="404380.Gbem_2764"/>
<dbReference type="KEGG" id="gbm:Gbem_2764"/>
<dbReference type="eggNOG" id="COG0360">
    <property type="taxonomic scope" value="Bacteria"/>
</dbReference>
<dbReference type="HOGENOM" id="CLU_113441_4_0_7"/>
<dbReference type="OrthoDB" id="9812702at2"/>
<dbReference type="Proteomes" id="UP000008825">
    <property type="component" value="Chromosome"/>
</dbReference>
<dbReference type="GO" id="GO:0022627">
    <property type="term" value="C:cytosolic small ribosomal subunit"/>
    <property type="evidence" value="ECO:0007669"/>
    <property type="project" value="TreeGrafter"/>
</dbReference>
<dbReference type="GO" id="GO:0070181">
    <property type="term" value="F:small ribosomal subunit rRNA binding"/>
    <property type="evidence" value="ECO:0007669"/>
    <property type="project" value="TreeGrafter"/>
</dbReference>
<dbReference type="GO" id="GO:0003735">
    <property type="term" value="F:structural constituent of ribosome"/>
    <property type="evidence" value="ECO:0007669"/>
    <property type="project" value="InterPro"/>
</dbReference>
<dbReference type="GO" id="GO:0006412">
    <property type="term" value="P:translation"/>
    <property type="evidence" value="ECO:0007669"/>
    <property type="project" value="UniProtKB-UniRule"/>
</dbReference>
<dbReference type="CDD" id="cd00473">
    <property type="entry name" value="bS6"/>
    <property type="match status" value="1"/>
</dbReference>
<dbReference type="Gene3D" id="3.30.70.60">
    <property type="match status" value="1"/>
</dbReference>
<dbReference type="HAMAP" id="MF_00360">
    <property type="entry name" value="Ribosomal_bS6"/>
    <property type="match status" value="1"/>
</dbReference>
<dbReference type="InterPro" id="IPR000529">
    <property type="entry name" value="Ribosomal_bS6"/>
</dbReference>
<dbReference type="InterPro" id="IPR035980">
    <property type="entry name" value="Ribosomal_bS6_sf"/>
</dbReference>
<dbReference type="InterPro" id="IPR020814">
    <property type="entry name" value="Ribosomal_S6_plastid/chlpt"/>
</dbReference>
<dbReference type="InterPro" id="IPR014717">
    <property type="entry name" value="Transl_elong_EF1B/ribsomal_bS6"/>
</dbReference>
<dbReference type="NCBIfam" id="TIGR00166">
    <property type="entry name" value="S6"/>
    <property type="match status" value="1"/>
</dbReference>
<dbReference type="PANTHER" id="PTHR21011">
    <property type="entry name" value="MITOCHONDRIAL 28S RIBOSOMAL PROTEIN S6"/>
    <property type="match status" value="1"/>
</dbReference>
<dbReference type="PANTHER" id="PTHR21011:SF1">
    <property type="entry name" value="SMALL RIBOSOMAL SUBUNIT PROTEIN BS6M"/>
    <property type="match status" value="1"/>
</dbReference>
<dbReference type="Pfam" id="PF01250">
    <property type="entry name" value="Ribosomal_S6"/>
    <property type="match status" value="1"/>
</dbReference>
<dbReference type="SUPFAM" id="SSF54995">
    <property type="entry name" value="Ribosomal protein S6"/>
    <property type="match status" value="1"/>
</dbReference>
<sequence length="134" mass="14974">MSRMYETIYIVQPDLGDEEIKALSTKVQDVIASMNGDFKRVEDWGTRKLAYPINKNPRGRYFYLRFDGDSGLIAELERRLRLDDKVIRYQSVKLETEVVAPAAAPVKSAEEGTEEVAAEAATEAPAETTTTVEG</sequence>